<feature type="chain" id="PRO_1000204931" description="NAD-capped RNA hydrolase NudC">
    <location>
        <begin position="1"/>
        <end position="260"/>
    </location>
</feature>
<feature type="domain" description="Nudix hydrolase" evidence="1">
    <location>
        <begin position="125"/>
        <end position="248"/>
    </location>
</feature>
<feature type="short sequence motif" description="Nudix box" evidence="1">
    <location>
        <begin position="159"/>
        <end position="180"/>
    </location>
</feature>
<feature type="binding site" evidence="1">
    <location>
        <position position="69"/>
    </location>
    <ligand>
        <name>substrate</name>
    </ligand>
</feature>
<feature type="binding site" evidence="1">
    <location>
        <position position="98"/>
    </location>
    <ligand>
        <name>Zn(2+)</name>
        <dbReference type="ChEBI" id="CHEBI:29105"/>
    </ligand>
</feature>
<feature type="binding site" evidence="1">
    <location>
        <position position="101"/>
    </location>
    <ligand>
        <name>Zn(2+)</name>
        <dbReference type="ChEBI" id="CHEBI:29105"/>
    </ligand>
</feature>
<feature type="binding site" evidence="1">
    <location>
        <position position="111"/>
    </location>
    <ligand>
        <name>substrate</name>
    </ligand>
</feature>
<feature type="binding site" evidence="1">
    <location>
        <position position="116"/>
    </location>
    <ligand>
        <name>Zn(2+)</name>
        <dbReference type="ChEBI" id="CHEBI:29105"/>
    </ligand>
</feature>
<feature type="binding site" evidence="1">
    <location>
        <position position="119"/>
    </location>
    <ligand>
        <name>Zn(2+)</name>
        <dbReference type="ChEBI" id="CHEBI:29105"/>
    </ligand>
</feature>
<feature type="binding site" evidence="1">
    <location>
        <position position="124"/>
    </location>
    <ligand>
        <name>substrate</name>
    </ligand>
</feature>
<feature type="binding site" evidence="1">
    <location>
        <position position="158"/>
    </location>
    <ligand>
        <name>a divalent metal cation</name>
        <dbReference type="ChEBI" id="CHEBI:60240"/>
        <label>1</label>
    </ligand>
</feature>
<feature type="binding site" evidence="1">
    <location>
        <position position="174"/>
    </location>
    <ligand>
        <name>a divalent metal cation</name>
        <dbReference type="ChEBI" id="CHEBI:60240"/>
        <label>2</label>
    </ligand>
</feature>
<feature type="binding site" evidence="1">
    <location>
        <position position="174"/>
    </location>
    <ligand>
        <name>a divalent metal cation</name>
        <dbReference type="ChEBI" id="CHEBI:60240"/>
        <label>3</label>
    </ligand>
</feature>
<feature type="binding site" evidence="1">
    <location>
        <position position="178"/>
    </location>
    <ligand>
        <name>a divalent metal cation</name>
        <dbReference type="ChEBI" id="CHEBI:60240"/>
        <label>1</label>
    </ligand>
</feature>
<feature type="binding site" evidence="1">
    <location>
        <position position="178"/>
    </location>
    <ligand>
        <name>a divalent metal cation</name>
        <dbReference type="ChEBI" id="CHEBI:60240"/>
        <label>3</label>
    </ligand>
</feature>
<feature type="binding site" evidence="1">
    <location>
        <begin position="192"/>
        <end position="199"/>
    </location>
    <ligand>
        <name>substrate</name>
    </ligand>
</feature>
<feature type="binding site" evidence="1">
    <location>
        <position position="219"/>
    </location>
    <ligand>
        <name>a divalent metal cation</name>
        <dbReference type="ChEBI" id="CHEBI:60240"/>
        <label>1</label>
    </ligand>
</feature>
<feature type="binding site" evidence="1">
    <location>
        <position position="219"/>
    </location>
    <ligand>
        <name>a divalent metal cation</name>
        <dbReference type="ChEBI" id="CHEBI:60240"/>
        <label>3</label>
    </ligand>
</feature>
<feature type="binding site" evidence="1">
    <location>
        <position position="241"/>
    </location>
    <ligand>
        <name>substrate</name>
    </ligand>
</feature>
<reference key="1">
    <citation type="submission" date="2009-07" db="EMBL/GenBank/DDBJ databases">
        <title>Complete sequence of Pectobacterium carotovorum subsp. carotovorum PC1.</title>
        <authorList>
            <consortium name="US DOE Joint Genome Institute"/>
            <person name="Lucas S."/>
            <person name="Copeland A."/>
            <person name="Lapidus A."/>
            <person name="Glavina del Rio T."/>
            <person name="Tice H."/>
            <person name="Bruce D."/>
            <person name="Goodwin L."/>
            <person name="Pitluck S."/>
            <person name="Munk A.C."/>
            <person name="Brettin T."/>
            <person name="Detter J.C."/>
            <person name="Han C."/>
            <person name="Tapia R."/>
            <person name="Larimer F."/>
            <person name="Land M."/>
            <person name="Hauser L."/>
            <person name="Kyrpides N."/>
            <person name="Mikhailova N."/>
            <person name="Balakrishnan V."/>
            <person name="Glasner J."/>
            <person name="Perna N.T."/>
        </authorList>
    </citation>
    <scope>NUCLEOTIDE SEQUENCE [LARGE SCALE GENOMIC DNA]</scope>
    <source>
        <strain>PC1</strain>
    </source>
</reference>
<gene>
    <name evidence="1" type="primary">nudC</name>
    <name type="ordered locus">PC1_0218</name>
</gene>
<keyword id="KW-0378">Hydrolase</keyword>
<keyword id="KW-0460">Magnesium</keyword>
<keyword id="KW-0464">Manganese</keyword>
<keyword id="KW-0479">Metal-binding</keyword>
<keyword id="KW-0520">NAD</keyword>
<keyword id="KW-0862">Zinc</keyword>
<proteinExistence type="inferred from homology"/>
<sequence length="260" mass="29833">MEQTLKGDETGWWVVSDAVQIWLPQGELPCGTATKWSLQGKTARQIGEWQEQPVWLVCQGRDTDMASVRQLLDQDVGLFQLAGRGVQLAEFYRSHRFCGYCGHEMVRSKTELACLCHHCKERYYPQIAPCIIVAIRRGEEILLAQHNRHRGNMYTVLAGFVEVGETLEQTVVREVMEESQVQIKNLRYVSSQPWPFPHSLMMAFMAEYAGGEIKHDPKELRDAGWFRYDQLPQLPPPGTVARRLIEDTVVLCRAYHENEG</sequence>
<evidence type="ECO:0000255" key="1">
    <source>
        <dbReference type="HAMAP-Rule" id="MF_00297"/>
    </source>
</evidence>
<accession>C6DHS8</accession>
<dbReference type="EC" id="3.6.1.-" evidence="1"/>
<dbReference type="EC" id="3.6.1.22" evidence="1"/>
<dbReference type="EMBL" id="CP001657">
    <property type="protein sequence ID" value="ACT11278.1"/>
    <property type="molecule type" value="Genomic_DNA"/>
</dbReference>
<dbReference type="RefSeq" id="WP_012772947.1">
    <property type="nucleotide sequence ID" value="NC_012917.1"/>
</dbReference>
<dbReference type="SMR" id="C6DHS8"/>
<dbReference type="STRING" id="561230.PC1_0218"/>
<dbReference type="GeneID" id="67795986"/>
<dbReference type="KEGG" id="pct:PC1_0218"/>
<dbReference type="eggNOG" id="COG2816">
    <property type="taxonomic scope" value="Bacteria"/>
</dbReference>
<dbReference type="HOGENOM" id="CLU_037162_0_1_6"/>
<dbReference type="OrthoDB" id="9791656at2"/>
<dbReference type="Proteomes" id="UP000002736">
    <property type="component" value="Chromosome"/>
</dbReference>
<dbReference type="GO" id="GO:0005829">
    <property type="term" value="C:cytosol"/>
    <property type="evidence" value="ECO:0007669"/>
    <property type="project" value="TreeGrafter"/>
</dbReference>
<dbReference type="GO" id="GO:0000287">
    <property type="term" value="F:magnesium ion binding"/>
    <property type="evidence" value="ECO:0007669"/>
    <property type="project" value="UniProtKB-UniRule"/>
</dbReference>
<dbReference type="GO" id="GO:0030145">
    <property type="term" value="F:manganese ion binding"/>
    <property type="evidence" value="ECO:0007669"/>
    <property type="project" value="UniProtKB-UniRule"/>
</dbReference>
<dbReference type="GO" id="GO:0000210">
    <property type="term" value="F:NAD+ diphosphatase activity"/>
    <property type="evidence" value="ECO:0007669"/>
    <property type="project" value="UniProtKB-UniRule"/>
</dbReference>
<dbReference type="GO" id="GO:0035529">
    <property type="term" value="F:NADH pyrophosphatase activity"/>
    <property type="evidence" value="ECO:0007669"/>
    <property type="project" value="TreeGrafter"/>
</dbReference>
<dbReference type="GO" id="GO:0110153">
    <property type="term" value="F:RNA NAD-cap (NMN-forming) hydrolase activity"/>
    <property type="evidence" value="ECO:0007669"/>
    <property type="project" value="RHEA"/>
</dbReference>
<dbReference type="GO" id="GO:0008270">
    <property type="term" value="F:zinc ion binding"/>
    <property type="evidence" value="ECO:0007669"/>
    <property type="project" value="UniProtKB-UniRule"/>
</dbReference>
<dbReference type="GO" id="GO:0019677">
    <property type="term" value="P:NAD catabolic process"/>
    <property type="evidence" value="ECO:0007669"/>
    <property type="project" value="TreeGrafter"/>
</dbReference>
<dbReference type="GO" id="GO:0006734">
    <property type="term" value="P:NADH metabolic process"/>
    <property type="evidence" value="ECO:0007669"/>
    <property type="project" value="TreeGrafter"/>
</dbReference>
<dbReference type="GO" id="GO:0006742">
    <property type="term" value="P:NADP catabolic process"/>
    <property type="evidence" value="ECO:0007669"/>
    <property type="project" value="TreeGrafter"/>
</dbReference>
<dbReference type="CDD" id="cd03429">
    <property type="entry name" value="NUDIX_NADH_pyrophosphatase_Nudt13"/>
    <property type="match status" value="1"/>
</dbReference>
<dbReference type="FunFam" id="3.90.79.10:FF:000004">
    <property type="entry name" value="NADH pyrophosphatase"/>
    <property type="match status" value="1"/>
</dbReference>
<dbReference type="FunFam" id="3.90.79.20:FF:000001">
    <property type="entry name" value="NADH pyrophosphatase"/>
    <property type="match status" value="1"/>
</dbReference>
<dbReference type="Gene3D" id="3.90.79.20">
    <property type="match status" value="1"/>
</dbReference>
<dbReference type="Gene3D" id="3.90.79.10">
    <property type="entry name" value="Nucleoside Triphosphate Pyrophosphohydrolase"/>
    <property type="match status" value="1"/>
</dbReference>
<dbReference type="HAMAP" id="MF_00297">
    <property type="entry name" value="Nudix_NudC"/>
    <property type="match status" value="1"/>
</dbReference>
<dbReference type="InterPro" id="IPR050241">
    <property type="entry name" value="NAD-cap_RNA_hydrolase_NudC"/>
</dbReference>
<dbReference type="InterPro" id="IPR049734">
    <property type="entry name" value="NudC-like_C"/>
</dbReference>
<dbReference type="InterPro" id="IPR015797">
    <property type="entry name" value="NUDIX_hydrolase-like_dom_sf"/>
</dbReference>
<dbReference type="InterPro" id="IPR000086">
    <property type="entry name" value="NUDIX_hydrolase_dom"/>
</dbReference>
<dbReference type="InterPro" id="IPR022925">
    <property type="entry name" value="RNA_Hydrolase_NudC"/>
</dbReference>
<dbReference type="InterPro" id="IPR015376">
    <property type="entry name" value="Znr_NADH_PPase"/>
</dbReference>
<dbReference type="NCBIfam" id="NF001299">
    <property type="entry name" value="PRK00241.1"/>
    <property type="match status" value="1"/>
</dbReference>
<dbReference type="PANTHER" id="PTHR42904:SF6">
    <property type="entry name" value="NAD-CAPPED RNA HYDROLASE NUDT12"/>
    <property type="match status" value="1"/>
</dbReference>
<dbReference type="PANTHER" id="PTHR42904">
    <property type="entry name" value="NUDIX HYDROLASE, NUDC SUBFAMILY"/>
    <property type="match status" value="1"/>
</dbReference>
<dbReference type="Pfam" id="PF00293">
    <property type="entry name" value="NUDIX"/>
    <property type="match status" value="1"/>
</dbReference>
<dbReference type="Pfam" id="PF09297">
    <property type="entry name" value="Zn_ribbon_NUD"/>
    <property type="match status" value="1"/>
</dbReference>
<dbReference type="SUPFAM" id="SSF55811">
    <property type="entry name" value="Nudix"/>
    <property type="match status" value="2"/>
</dbReference>
<dbReference type="PROSITE" id="PS51462">
    <property type="entry name" value="NUDIX"/>
    <property type="match status" value="1"/>
</dbReference>
<comment type="function">
    <text evidence="1">mRNA decapping enzyme that specifically removes the nicotinamide adenine dinucleotide (NAD) cap from a subset of mRNAs by hydrolyzing the diphosphate linkage to produce nicotinamide mononucleotide (NMN) and 5' monophosphate mRNA. The NAD-cap is present at the 5'-end of some mRNAs and stabilizes RNA against 5'-processing. Has preference for mRNAs with a 5'-end purine. Catalyzes the hydrolysis of a broad range of dinucleotide pyrophosphates.</text>
</comment>
<comment type="catalytic activity">
    <reaction evidence="1">
        <text>a 5'-end NAD(+)-phospho-ribonucleoside in mRNA + H2O = a 5'-end phospho-adenosine-phospho-ribonucleoside in mRNA + beta-nicotinamide D-ribonucleotide + 2 H(+)</text>
        <dbReference type="Rhea" id="RHEA:60876"/>
        <dbReference type="Rhea" id="RHEA-COMP:15698"/>
        <dbReference type="Rhea" id="RHEA-COMP:15719"/>
        <dbReference type="ChEBI" id="CHEBI:14649"/>
        <dbReference type="ChEBI" id="CHEBI:15377"/>
        <dbReference type="ChEBI" id="CHEBI:15378"/>
        <dbReference type="ChEBI" id="CHEBI:144029"/>
        <dbReference type="ChEBI" id="CHEBI:144051"/>
    </reaction>
    <physiologicalReaction direction="left-to-right" evidence="1">
        <dbReference type="Rhea" id="RHEA:60877"/>
    </physiologicalReaction>
</comment>
<comment type="catalytic activity">
    <reaction evidence="1">
        <text>NAD(+) + H2O = beta-nicotinamide D-ribonucleotide + AMP + 2 H(+)</text>
        <dbReference type="Rhea" id="RHEA:11800"/>
        <dbReference type="ChEBI" id="CHEBI:14649"/>
        <dbReference type="ChEBI" id="CHEBI:15377"/>
        <dbReference type="ChEBI" id="CHEBI:15378"/>
        <dbReference type="ChEBI" id="CHEBI:57540"/>
        <dbReference type="ChEBI" id="CHEBI:456215"/>
        <dbReference type="EC" id="3.6.1.22"/>
    </reaction>
</comment>
<comment type="catalytic activity">
    <reaction evidence="1">
        <text>NADH + H2O = reduced beta-nicotinamide D-ribonucleotide + AMP + 2 H(+)</text>
        <dbReference type="Rhea" id="RHEA:48868"/>
        <dbReference type="ChEBI" id="CHEBI:15377"/>
        <dbReference type="ChEBI" id="CHEBI:15378"/>
        <dbReference type="ChEBI" id="CHEBI:57945"/>
        <dbReference type="ChEBI" id="CHEBI:90832"/>
        <dbReference type="ChEBI" id="CHEBI:456215"/>
        <dbReference type="EC" id="3.6.1.22"/>
    </reaction>
</comment>
<comment type="cofactor">
    <cofactor evidence="1">
        <name>Mg(2+)</name>
        <dbReference type="ChEBI" id="CHEBI:18420"/>
    </cofactor>
    <cofactor evidence="1">
        <name>Mn(2+)</name>
        <dbReference type="ChEBI" id="CHEBI:29035"/>
    </cofactor>
    <text evidence="1">Divalent metal cations. Mg(2+) or Mn(2+).</text>
</comment>
<comment type="cofactor">
    <cofactor evidence="1">
        <name>Zn(2+)</name>
        <dbReference type="ChEBI" id="CHEBI:29105"/>
    </cofactor>
    <text evidence="1">Binds 1 zinc ion per subunit.</text>
</comment>
<comment type="subunit">
    <text evidence="1">Homodimer.</text>
</comment>
<comment type="similarity">
    <text evidence="1">Belongs to the Nudix hydrolase family. NudC subfamily.</text>
</comment>
<name>NUDC_PECCP</name>
<protein>
    <recommendedName>
        <fullName evidence="1">NAD-capped RNA hydrolase NudC</fullName>
        <shortName evidence="1">DeNADding enzyme NudC</shortName>
        <ecNumber evidence="1">3.6.1.-</ecNumber>
    </recommendedName>
    <alternativeName>
        <fullName evidence="1">NADH pyrophosphatase</fullName>
        <ecNumber evidence="1">3.6.1.22</ecNumber>
    </alternativeName>
</protein>
<organism>
    <name type="scientific">Pectobacterium carotovorum subsp. carotovorum (strain PC1)</name>
    <dbReference type="NCBI Taxonomy" id="561230"/>
    <lineage>
        <taxon>Bacteria</taxon>
        <taxon>Pseudomonadati</taxon>
        <taxon>Pseudomonadota</taxon>
        <taxon>Gammaproteobacteria</taxon>
        <taxon>Enterobacterales</taxon>
        <taxon>Pectobacteriaceae</taxon>
        <taxon>Pectobacterium</taxon>
    </lineage>
</organism>